<evidence type="ECO:0000255" key="1">
    <source>
        <dbReference type="HAMAP-Rule" id="MF_00394"/>
    </source>
</evidence>
<organism>
    <name type="scientific">Gluconobacter oxydans (strain 621H)</name>
    <name type="common">Gluconobacter suboxydans</name>
    <dbReference type="NCBI Taxonomy" id="290633"/>
    <lineage>
        <taxon>Bacteria</taxon>
        <taxon>Pseudomonadati</taxon>
        <taxon>Pseudomonadota</taxon>
        <taxon>Alphaproteobacteria</taxon>
        <taxon>Acetobacterales</taxon>
        <taxon>Acetobacteraceae</taxon>
        <taxon>Gluconobacter</taxon>
    </lineage>
</organism>
<gene>
    <name evidence="1" type="primary">gpsA</name>
    <name type="ordered locus">GOX1880</name>
</gene>
<dbReference type="EC" id="1.1.1.94" evidence="1"/>
<dbReference type="EMBL" id="CP000009">
    <property type="protein sequence ID" value="AAW61618.1"/>
    <property type="molecule type" value="Genomic_DNA"/>
</dbReference>
<dbReference type="RefSeq" id="WP_011253399.1">
    <property type="nucleotide sequence ID" value="NC_006677.1"/>
</dbReference>
<dbReference type="SMR" id="Q5FPS8"/>
<dbReference type="STRING" id="290633.GOX1880"/>
<dbReference type="KEGG" id="gox:GOX1880"/>
<dbReference type="eggNOG" id="COG0240">
    <property type="taxonomic scope" value="Bacteria"/>
</dbReference>
<dbReference type="HOGENOM" id="CLU_033449_0_2_5"/>
<dbReference type="UniPathway" id="UPA00940"/>
<dbReference type="Proteomes" id="UP000006375">
    <property type="component" value="Chromosome"/>
</dbReference>
<dbReference type="GO" id="GO:0005829">
    <property type="term" value="C:cytosol"/>
    <property type="evidence" value="ECO:0007669"/>
    <property type="project" value="TreeGrafter"/>
</dbReference>
<dbReference type="GO" id="GO:0047952">
    <property type="term" value="F:glycerol-3-phosphate dehydrogenase [NAD(P)+] activity"/>
    <property type="evidence" value="ECO:0007669"/>
    <property type="project" value="UniProtKB-UniRule"/>
</dbReference>
<dbReference type="GO" id="GO:0051287">
    <property type="term" value="F:NAD binding"/>
    <property type="evidence" value="ECO:0007669"/>
    <property type="project" value="InterPro"/>
</dbReference>
<dbReference type="GO" id="GO:0005975">
    <property type="term" value="P:carbohydrate metabolic process"/>
    <property type="evidence" value="ECO:0007669"/>
    <property type="project" value="InterPro"/>
</dbReference>
<dbReference type="GO" id="GO:0046167">
    <property type="term" value="P:glycerol-3-phosphate biosynthetic process"/>
    <property type="evidence" value="ECO:0007669"/>
    <property type="project" value="UniProtKB-UniRule"/>
</dbReference>
<dbReference type="GO" id="GO:0046168">
    <property type="term" value="P:glycerol-3-phosphate catabolic process"/>
    <property type="evidence" value="ECO:0007669"/>
    <property type="project" value="InterPro"/>
</dbReference>
<dbReference type="GO" id="GO:0006650">
    <property type="term" value="P:glycerophospholipid metabolic process"/>
    <property type="evidence" value="ECO:0007669"/>
    <property type="project" value="UniProtKB-UniRule"/>
</dbReference>
<dbReference type="GO" id="GO:0008654">
    <property type="term" value="P:phospholipid biosynthetic process"/>
    <property type="evidence" value="ECO:0007669"/>
    <property type="project" value="UniProtKB-KW"/>
</dbReference>
<dbReference type="FunFam" id="1.10.1040.10:FF:000001">
    <property type="entry name" value="Glycerol-3-phosphate dehydrogenase [NAD(P)+]"/>
    <property type="match status" value="1"/>
</dbReference>
<dbReference type="Gene3D" id="1.10.1040.10">
    <property type="entry name" value="N-(1-d-carboxylethyl)-l-norvaline Dehydrogenase, domain 2"/>
    <property type="match status" value="1"/>
</dbReference>
<dbReference type="Gene3D" id="3.40.50.720">
    <property type="entry name" value="NAD(P)-binding Rossmann-like Domain"/>
    <property type="match status" value="1"/>
</dbReference>
<dbReference type="HAMAP" id="MF_00394">
    <property type="entry name" value="NAD_Glyc3P_dehydrog"/>
    <property type="match status" value="1"/>
</dbReference>
<dbReference type="InterPro" id="IPR008927">
    <property type="entry name" value="6-PGluconate_DH-like_C_sf"/>
</dbReference>
<dbReference type="InterPro" id="IPR013328">
    <property type="entry name" value="6PGD_dom2"/>
</dbReference>
<dbReference type="InterPro" id="IPR006168">
    <property type="entry name" value="G3P_DH_NAD-dep"/>
</dbReference>
<dbReference type="InterPro" id="IPR006109">
    <property type="entry name" value="G3P_DH_NAD-dep_C"/>
</dbReference>
<dbReference type="InterPro" id="IPR011128">
    <property type="entry name" value="G3P_DH_NAD-dep_N"/>
</dbReference>
<dbReference type="InterPro" id="IPR036291">
    <property type="entry name" value="NAD(P)-bd_dom_sf"/>
</dbReference>
<dbReference type="NCBIfam" id="NF000940">
    <property type="entry name" value="PRK00094.1-2"/>
    <property type="match status" value="1"/>
</dbReference>
<dbReference type="NCBIfam" id="NF000942">
    <property type="entry name" value="PRK00094.1-4"/>
    <property type="match status" value="1"/>
</dbReference>
<dbReference type="PANTHER" id="PTHR11728">
    <property type="entry name" value="GLYCEROL-3-PHOSPHATE DEHYDROGENASE"/>
    <property type="match status" value="1"/>
</dbReference>
<dbReference type="PANTHER" id="PTHR11728:SF1">
    <property type="entry name" value="GLYCEROL-3-PHOSPHATE DEHYDROGENASE [NAD(+)] 2, CHLOROPLASTIC"/>
    <property type="match status" value="1"/>
</dbReference>
<dbReference type="Pfam" id="PF07479">
    <property type="entry name" value="NAD_Gly3P_dh_C"/>
    <property type="match status" value="1"/>
</dbReference>
<dbReference type="Pfam" id="PF01210">
    <property type="entry name" value="NAD_Gly3P_dh_N"/>
    <property type="match status" value="1"/>
</dbReference>
<dbReference type="PIRSF" id="PIRSF000114">
    <property type="entry name" value="Glycerol-3-P_dh"/>
    <property type="match status" value="1"/>
</dbReference>
<dbReference type="PRINTS" id="PR00077">
    <property type="entry name" value="GPDHDRGNASE"/>
</dbReference>
<dbReference type="SUPFAM" id="SSF48179">
    <property type="entry name" value="6-phosphogluconate dehydrogenase C-terminal domain-like"/>
    <property type="match status" value="1"/>
</dbReference>
<dbReference type="SUPFAM" id="SSF51735">
    <property type="entry name" value="NAD(P)-binding Rossmann-fold domains"/>
    <property type="match status" value="1"/>
</dbReference>
<dbReference type="PROSITE" id="PS00957">
    <property type="entry name" value="NAD_G3PDH"/>
    <property type="match status" value="1"/>
</dbReference>
<proteinExistence type="inferred from homology"/>
<keyword id="KW-0963">Cytoplasm</keyword>
<keyword id="KW-0444">Lipid biosynthesis</keyword>
<keyword id="KW-0443">Lipid metabolism</keyword>
<keyword id="KW-0520">NAD</keyword>
<keyword id="KW-0521">NADP</keyword>
<keyword id="KW-0547">Nucleotide-binding</keyword>
<keyword id="KW-0560">Oxidoreductase</keyword>
<keyword id="KW-0594">Phospholipid biosynthesis</keyword>
<keyword id="KW-1208">Phospholipid metabolism</keyword>
<keyword id="KW-1185">Reference proteome</keyword>
<protein>
    <recommendedName>
        <fullName evidence="1">Glycerol-3-phosphate dehydrogenase [NAD(P)+]</fullName>
        <ecNumber evidence="1">1.1.1.94</ecNumber>
    </recommendedName>
    <alternativeName>
        <fullName evidence="1">NAD(P)(+)-dependent glycerol-3-phosphate dehydrogenase</fullName>
    </alternativeName>
    <alternativeName>
        <fullName evidence="1">NAD(P)H-dependent dihydroxyacetone-phosphate reductase</fullName>
    </alternativeName>
</protein>
<accession>Q5FPS8</accession>
<reference key="1">
    <citation type="journal article" date="2005" name="Nat. Biotechnol.">
        <title>Complete genome sequence of the acetic acid bacterium Gluconobacter oxydans.</title>
        <authorList>
            <person name="Prust C."/>
            <person name="Hoffmeister M."/>
            <person name="Liesegang H."/>
            <person name="Wiezer A."/>
            <person name="Fricke W.F."/>
            <person name="Ehrenreich A."/>
            <person name="Gottschalk G."/>
            <person name="Deppenmeier U."/>
        </authorList>
    </citation>
    <scope>NUCLEOTIDE SEQUENCE [LARGE SCALE GENOMIC DNA]</scope>
    <source>
        <strain>621H</strain>
    </source>
</reference>
<sequence>MTTRPHIAVIGAGAWGTALACATAATGADVTLWMRNPVPPRTRTLPRLPDITLPENVTITGDFPRTANVVLLVTPVQTARDVSTRLQTVLDPAVPVVTCCKGLEQATSLLPLDVLAETMPGRPTGVLSGPNFAIEVAKGLPAAATLACADLALAQKLTALLNTSSFRLYASDDAAGVQLAGAAKNVIAIGAGITIGAGLGENARAALITRAVAEIGRLAEATGGRASTLAGLAGMGDLILTCTGRGSRNYSVGLELGEGRPLADILASRTTVAEGVLTAPAMLALARKHNVRVPIIETVTRLLNDGVSIEEARHLLLDRPPTRE</sequence>
<feature type="chain" id="PRO_0000255317" description="Glycerol-3-phosphate dehydrogenase [NAD(P)+]">
    <location>
        <begin position="1"/>
        <end position="324"/>
    </location>
</feature>
<feature type="active site" description="Proton acceptor" evidence="1">
    <location>
        <position position="184"/>
    </location>
</feature>
<feature type="binding site" evidence="1">
    <location>
        <position position="15"/>
    </location>
    <ligand>
        <name>NADPH</name>
        <dbReference type="ChEBI" id="CHEBI:57783"/>
    </ligand>
</feature>
<feature type="binding site" evidence="1">
    <location>
        <position position="35"/>
    </location>
    <ligand>
        <name>NADPH</name>
        <dbReference type="ChEBI" id="CHEBI:57783"/>
    </ligand>
</feature>
<feature type="binding site" evidence="1">
    <location>
        <position position="101"/>
    </location>
    <ligand>
        <name>NADPH</name>
        <dbReference type="ChEBI" id="CHEBI:57783"/>
    </ligand>
</feature>
<feature type="binding site" evidence="1">
    <location>
        <position position="101"/>
    </location>
    <ligand>
        <name>sn-glycerol 3-phosphate</name>
        <dbReference type="ChEBI" id="CHEBI:57597"/>
    </ligand>
</feature>
<feature type="binding site" evidence="1">
    <location>
        <position position="129"/>
    </location>
    <ligand>
        <name>sn-glycerol 3-phosphate</name>
        <dbReference type="ChEBI" id="CHEBI:57597"/>
    </ligand>
</feature>
<feature type="binding site" evidence="1">
    <location>
        <position position="133"/>
    </location>
    <ligand>
        <name>NADPH</name>
        <dbReference type="ChEBI" id="CHEBI:57783"/>
    </ligand>
</feature>
<feature type="binding site" evidence="1">
    <location>
        <position position="184"/>
    </location>
    <ligand>
        <name>sn-glycerol 3-phosphate</name>
        <dbReference type="ChEBI" id="CHEBI:57597"/>
    </ligand>
</feature>
<feature type="binding site" evidence="1">
    <location>
        <position position="237"/>
    </location>
    <ligand>
        <name>sn-glycerol 3-phosphate</name>
        <dbReference type="ChEBI" id="CHEBI:57597"/>
    </ligand>
</feature>
<feature type="binding site" evidence="1">
    <location>
        <position position="247"/>
    </location>
    <ligand>
        <name>sn-glycerol 3-phosphate</name>
        <dbReference type="ChEBI" id="CHEBI:57597"/>
    </ligand>
</feature>
<feature type="binding site" evidence="1">
    <location>
        <position position="248"/>
    </location>
    <ligand>
        <name>NADPH</name>
        <dbReference type="ChEBI" id="CHEBI:57783"/>
    </ligand>
</feature>
<feature type="binding site" evidence="1">
    <location>
        <position position="248"/>
    </location>
    <ligand>
        <name>sn-glycerol 3-phosphate</name>
        <dbReference type="ChEBI" id="CHEBI:57597"/>
    </ligand>
</feature>
<feature type="binding site" evidence="1">
    <location>
        <position position="249"/>
    </location>
    <ligand>
        <name>sn-glycerol 3-phosphate</name>
        <dbReference type="ChEBI" id="CHEBI:57597"/>
    </ligand>
</feature>
<feature type="binding site" evidence="1">
    <location>
        <position position="272"/>
    </location>
    <ligand>
        <name>NADPH</name>
        <dbReference type="ChEBI" id="CHEBI:57783"/>
    </ligand>
</feature>
<feature type="binding site" evidence="1">
    <location>
        <position position="274"/>
    </location>
    <ligand>
        <name>NADPH</name>
        <dbReference type="ChEBI" id="CHEBI:57783"/>
    </ligand>
</feature>
<name>GPDA_GLUOX</name>
<comment type="function">
    <text evidence="1">Catalyzes the reduction of the glycolytic intermediate dihydroxyacetone phosphate (DHAP) to sn-glycerol 3-phosphate (G3P), the key precursor for phospholipid synthesis.</text>
</comment>
<comment type="catalytic activity">
    <reaction evidence="1">
        <text>sn-glycerol 3-phosphate + NAD(+) = dihydroxyacetone phosphate + NADH + H(+)</text>
        <dbReference type="Rhea" id="RHEA:11092"/>
        <dbReference type="ChEBI" id="CHEBI:15378"/>
        <dbReference type="ChEBI" id="CHEBI:57540"/>
        <dbReference type="ChEBI" id="CHEBI:57597"/>
        <dbReference type="ChEBI" id="CHEBI:57642"/>
        <dbReference type="ChEBI" id="CHEBI:57945"/>
        <dbReference type="EC" id="1.1.1.94"/>
    </reaction>
    <physiologicalReaction direction="right-to-left" evidence="1">
        <dbReference type="Rhea" id="RHEA:11094"/>
    </physiologicalReaction>
</comment>
<comment type="catalytic activity">
    <reaction evidence="1">
        <text>sn-glycerol 3-phosphate + NADP(+) = dihydroxyacetone phosphate + NADPH + H(+)</text>
        <dbReference type="Rhea" id="RHEA:11096"/>
        <dbReference type="ChEBI" id="CHEBI:15378"/>
        <dbReference type="ChEBI" id="CHEBI:57597"/>
        <dbReference type="ChEBI" id="CHEBI:57642"/>
        <dbReference type="ChEBI" id="CHEBI:57783"/>
        <dbReference type="ChEBI" id="CHEBI:58349"/>
        <dbReference type="EC" id="1.1.1.94"/>
    </reaction>
    <physiologicalReaction direction="right-to-left" evidence="1">
        <dbReference type="Rhea" id="RHEA:11098"/>
    </physiologicalReaction>
</comment>
<comment type="pathway">
    <text evidence="1">Membrane lipid metabolism; glycerophospholipid metabolism.</text>
</comment>
<comment type="subcellular location">
    <subcellularLocation>
        <location evidence="1">Cytoplasm</location>
    </subcellularLocation>
</comment>
<comment type="similarity">
    <text evidence="1">Belongs to the NAD-dependent glycerol-3-phosphate dehydrogenase family.</text>
</comment>